<reference key="1">
    <citation type="journal article" date="2006" name="Proc. Natl. Acad. Sci. U.S.A.">
        <title>Molecular genetic anatomy of inter- and intraserotype variation in the human bacterial pathogen group A Streptococcus.</title>
        <authorList>
            <person name="Beres S.B."/>
            <person name="Richter E.W."/>
            <person name="Nagiec M.J."/>
            <person name="Sumby P."/>
            <person name="Porcella S.F."/>
            <person name="DeLeo F.R."/>
            <person name="Musser J.M."/>
        </authorList>
    </citation>
    <scope>NUCLEOTIDE SEQUENCE [LARGE SCALE GENOMIC DNA]</scope>
    <source>
        <strain>MGAS2096</strain>
    </source>
</reference>
<protein>
    <recommendedName>
        <fullName evidence="1">Glutamate 5-kinase</fullName>
        <ecNumber evidence="1">2.7.2.11</ecNumber>
    </recommendedName>
    <alternativeName>
        <fullName evidence="1">Gamma-glutamyl kinase</fullName>
        <shortName evidence="1">GK</shortName>
    </alternativeName>
</protein>
<organism>
    <name type="scientific">Streptococcus pyogenes serotype M12 (strain MGAS2096)</name>
    <dbReference type="NCBI Taxonomy" id="370553"/>
    <lineage>
        <taxon>Bacteria</taxon>
        <taxon>Bacillati</taxon>
        <taxon>Bacillota</taxon>
        <taxon>Bacilli</taxon>
        <taxon>Lactobacillales</taxon>
        <taxon>Streptococcaceae</taxon>
        <taxon>Streptococcus</taxon>
    </lineage>
</organism>
<feature type="chain" id="PRO_0000253004" description="Glutamate 5-kinase">
    <location>
        <begin position="1"/>
        <end position="275"/>
    </location>
</feature>
<feature type="binding site" evidence="1">
    <location>
        <position position="17"/>
    </location>
    <ligand>
        <name>ATP</name>
        <dbReference type="ChEBI" id="CHEBI:30616"/>
    </ligand>
</feature>
<feature type="binding site" evidence="1">
    <location>
        <position position="57"/>
    </location>
    <ligand>
        <name>substrate</name>
    </ligand>
</feature>
<feature type="binding site" evidence="1">
    <location>
        <position position="144"/>
    </location>
    <ligand>
        <name>substrate</name>
    </ligand>
</feature>
<feature type="binding site" evidence="1">
    <location>
        <position position="160"/>
    </location>
    <ligand>
        <name>substrate</name>
    </ligand>
</feature>
<feature type="binding site" evidence="1">
    <location>
        <begin position="180"/>
        <end position="181"/>
    </location>
    <ligand>
        <name>ATP</name>
        <dbReference type="ChEBI" id="CHEBI:30616"/>
    </ligand>
</feature>
<feature type="binding site" evidence="1">
    <location>
        <begin position="222"/>
        <end position="228"/>
    </location>
    <ligand>
        <name>ATP</name>
        <dbReference type="ChEBI" id="CHEBI:30616"/>
    </ligand>
</feature>
<keyword id="KW-0028">Amino-acid biosynthesis</keyword>
<keyword id="KW-0067">ATP-binding</keyword>
<keyword id="KW-0963">Cytoplasm</keyword>
<keyword id="KW-0418">Kinase</keyword>
<keyword id="KW-0547">Nucleotide-binding</keyword>
<keyword id="KW-0641">Proline biosynthesis</keyword>
<keyword id="KW-0808">Transferase</keyword>
<accession>Q1JAG2</accession>
<evidence type="ECO:0000255" key="1">
    <source>
        <dbReference type="HAMAP-Rule" id="MF_00456"/>
    </source>
</evidence>
<name>PROB_STRPB</name>
<sequence>MGMMKRQFEDVTRIVIKIGTSSLVLPTGKINLEKIDQLAFVISSLMNKGKEVILVSSGAMGFGLDILKMEKRPTNLAKQQAVSSVGQVAMMSLYSQIFAHYQTNVSQILLTRDVVVFPESLANVTNAFESLISLGIVPIVNENDAVSVDEMDHATKFGDNDRLSAVVAGITKADLLIMLSDIDGLFDKNPTIYEDAQLRSHVAVITQEIIASAGGAGSKFGTGGMLSKIQSAQMVFENKGQMVLMNGANPRDILRVLEGQPLGTWFKQIEEVTHD</sequence>
<proteinExistence type="inferred from homology"/>
<dbReference type="EC" id="2.7.2.11" evidence="1"/>
<dbReference type="EMBL" id="CP000261">
    <property type="protein sequence ID" value="ABF36446.1"/>
    <property type="molecule type" value="Genomic_DNA"/>
</dbReference>
<dbReference type="SMR" id="Q1JAG2"/>
<dbReference type="KEGG" id="spj:MGAS2096_Spy1394"/>
<dbReference type="HOGENOM" id="CLU_025400_0_2_9"/>
<dbReference type="UniPathway" id="UPA00098">
    <property type="reaction ID" value="UER00359"/>
</dbReference>
<dbReference type="GO" id="GO:0005829">
    <property type="term" value="C:cytosol"/>
    <property type="evidence" value="ECO:0007669"/>
    <property type="project" value="TreeGrafter"/>
</dbReference>
<dbReference type="GO" id="GO:0005524">
    <property type="term" value="F:ATP binding"/>
    <property type="evidence" value="ECO:0007669"/>
    <property type="project" value="UniProtKB-KW"/>
</dbReference>
<dbReference type="GO" id="GO:0004349">
    <property type="term" value="F:glutamate 5-kinase activity"/>
    <property type="evidence" value="ECO:0007669"/>
    <property type="project" value="UniProtKB-UniRule"/>
</dbReference>
<dbReference type="GO" id="GO:0055129">
    <property type="term" value="P:L-proline biosynthetic process"/>
    <property type="evidence" value="ECO:0007669"/>
    <property type="project" value="UniProtKB-UniRule"/>
</dbReference>
<dbReference type="CDD" id="cd04242">
    <property type="entry name" value="AAK_G5K_ProB"/>
    <property type="match status" value="1"/>
</dbReference>
<dbReference type="FunFam" id="3.40.1160.10:FF:000006">
    <property type="entry name" value="Glutamate 5-kinase"/>
    <property type="match status" value="1"/>
</dbReference>
<dbReference type="Gene3D" id="3.40.1160.10">
    <property type="entry name" value="Acetylglutamate kinase-like"/>
    <property type="match status" value="1"/>
</dbReference>
<dbReference type="HAMAP" id="MF_00456">
    <property type="entry name" value="ProB"/>
    <property type="match status" value="1"/>
</dbReference>
<dbReference type="InterPro" id="IPR036393">
    <property type="entry name" value="AceGlu_kinase-like_sf"/>
</dbReference>
<dbReference type="InterPro" id="IPR001048">
    <property type="entry name" value="Asp/Glu/Uridylate_kinase"/>
</dbReference>
<dbReference type="InterPro" id="IPR041739">
    <property type="entry name" value="G5K_ProB"/>
</dbReference>
<dbReference type="InterPro" id="IPR001057">
    <property type="entry name" value="Glu/AcGlu_kinase"/>
</dbReference>
<dbReference type="InterPro" id="IPR011529">
    <property type="entry name" value="Glu_5kinase"/>
</dbReference>
<dbReference type="InterPro" id="IPR005715">
    <property type="entry name" value="Glu_5kinase/COase_Synthase"/>
</dbReference>
<dbReference type="InterPro" id="IPR019797">
    <property type="entry name" value="Glutamate_5-kinase_CS"/>
</dbReference>
<dbReference type="NCBIfam" id="TIGR01027">
    <property type="entry name" value="proB"/>
    <property type="match status" value="1"/>
</dbReference>
<dbReference type="PANTHER" id="PTHR43654">
    <property type="entry name" value="GLUTAMATE 5-KINASE"/>
    <property type="match status" value="1"/>
</dbReference>
<dbReference type="PANTHER" id="PTHR43654:SF1">
    <property type="entry name" value="ISOPENTENYL PHOSPHATE KINASE"/>
    <property type="match status" value="1"/>
</dbReference>
<dbReference type="Pfam" id="PF00696">
    <property type="entry name" value="AA_kinase"/>
    <property type="match status" value="1"/>
</dbReference>
<dbReference type="PIRSF" id="PIRSF000729">
    <property type="entry name" value="GK"/>
    <property type="match status" value="1"/>
</dbReference>
<dbReference type="PRINTS" id="PR00474">
    <property type="entry name" value="GLU5KINASE"/>
</dbReference>
<dbReference type="SUPFAM" id="SSF53633">
    <property type="entry name" value="Carbamate kinase-like"/>
    <property type="match status" value="1"/>
</dbReference>
<dbReference type="PROSITE" id="PS00902">
    <property type="entry name" value="GLUTAMATE_5_KINASE"/>
    <property type="match status" value="1"/>
</dbReference>
<gene>
    <name evidence="1" type="primary">proB</name>
    <name type="ordered locus">MGAS2096_Spy1394</name>
</gene>
<comment type="function">
    <text evidence="1">Catalyzes the transfer of a phosphate group to glutamate to form L-glutamate 5-phosphate.</text>
</comment>
<comment type="catalytic activity">
    <reaction evidence="1">
        <text>L-glutamate + ATP = L-glutamyl 5-phosphate + ADP</text>
        <dbReference type="Rhea" id="RHEA:14877"/>
        <dbReference type="ChEBI" id="CHEBI:29985"/>
        <dbReference type="ChEBI" id="CHEBI:30616"/>
        <dbReference type="ChEBI" id="CHEBI:58274"/>
        <dbReference type="ChEBI" id="CHEBI:456216"/>
        <dbReference type="EC" id="2.7.2.11"/>
    </reaction>
</comment>
<comment type="pathway">
    <text evidence="1">Amino-acid biosynthesis; L-proline biosynthesis; L-glutamate 5-semialdehyde from L-glutamate: step 1/2.</text>
</comment>
<comment type="subcellular location">
    <subcellularLocation>
        <location evidence="1">Cytoplasm</location>
    </subcellularLocation>
</comment>
<comment type="similarity">
    <text evidence="1">Belongs to the glutamate 5-kinase family.</text>
</comment>